<dbReference type="EC" id="4.1.2.43"/>
<dbReference type="EMBL" id="CP000046">
    <property type="protein sequence ID" value="AAW37726.1"/>
    <property type="molecule type" value="Genomic_DNA"/>
</dbReference>
<dbReference type="SMR" id="Q5HIA5"/>
<dbReference type="KEGG" id="sac:SACOL0617"/>
<dbReference type="HOGENOM" id="CLU_081825_1_0_9"/>
<dbReference type="UniPathway" id="UPA00294">
    <property type="reaction ID" value="UER00434"/>
</dbReference>
<dbReference type="Proteomes" id="UP000000530">
    <property type="component" value="Chromosome"/>
</dbReference>
<dbReference type="GO" id="GO:0033982">
    <property type="term" value="F:3-dehydro-L-gulonate-6-phosphate decarboxylase activity"/>
    <property type="evidence" value="ECO:0007669"/>
    <property type="project" value="TreeGrafter"/>
</dbReference>
<dbReference type="GO" id="GO:0043801">
    <property type="term" value="F:hexulose-6-phosphate synthase activity"/>
    <property type="evidence" value="ECO:0007669"/>
    <property type="project" value="UniProtKB-EC"/>
</dbReference>
<dbReference type="GO" id="GO:0004590">
    <property type="term" value="F:orotidine-5'-phosphate decarboxylase activity"/>
    <property type="evidence" value="ECO:0007669"/>
    <property type="project" value="InterPro"/>
</dbReference>
<dbReference type="GO" id="GO:0006207">
    <property type="term" value="P:'de novo' pyrimidine nucleobase biosynthetic process"/>
    <property type="evidence" value="ECO:0007669"/>
    <property type="project" value="InterPro"/>
</dbReference>
<dbReference type="GO" id="GO:0019647">
    <property type="term" value="P:formaldehyde assimilation via ribulose monophosphate cycle"/>
    <property type="evidence" value="ECO:0007669"/>
    <property type="project" value="UniProtKB-UniPathway"/>
</dbReference>
<dbReference type="GO" id="GO:0019854">
    <property type="term" value="P:L-ascorbic acid catabolic process"/>
    <property type="evidence" value="ECO:0007669"/>
    <property type="project" value="TreeGrafter"/>
</dbReference>
<dbReference type="GO" id="GO:0006730">
    <property type="term" value="P:one-carbon metabolic process"/>
    <property type="evidence" value="ECO:0007669"/>
    <property type="project" value="UniProtKB-KW"/>
</dbReference>
<dbReference type="CDD" id="cd04726">
    <property type="entry name" value="KGPDC_HPS"/>
    <property type="match status" value="1"/>
</dbReference>
<dbReference type="FunFam" id="3.20.20.70:FF:000022">
    <property type="entry name" value="3-keto-L-gulonate-6-phosphate decarboxylase UlaD"/>
    <property type="match status" value="1"/>
</dbReference>
<dbReference type="Gene3D" id="3.20.20.70">
    <property type="entry name" value="Aldolase class I"/>
    <property type="match status" value="1"/>
</dbReference>
<dbReference type="InterPro" id="IPR017553">
    <property type="entry name" value="3-hexulose-6-phosphate_synth"/>
</dbReference>
<dbReference type="InterPro" id="IPR013785">
    <property type="entry name" value="Aldolase_TIM"/>
</dbReference>
<dbReference type="InterPro" id="IPR041710">
    <property type="entry name" value="HPS/KGPDC"/>
</dbReference>
<dbReference type="InterPro" id="IPR001754">
    <property type="entry name" value="OMPdeCOase_dom"/>
</dbReference>
<dbReference type="InterPro" id="IPR011060">
    <property type="entry name" value="RibuloseP-bd_barrel"/>
</dbReference>
<dbReference type="NCBIfam" id="TIGR03128">
    <property type="entry name" value="RuMP_HxlA"/>
    <property type="match status" value="1"/>
</dbReference>
<dbReference type="PANTHER" id="PTHR35039">
    <property type="entry name" value="3-KETO-L-GULONATE-6-PHOSPHATE DECARBOXYLASE SGBH-RELATED"/>
    <property type="match status" value="1"/>
</dbReference>
<dbReference type="PANTHER" id="PTHR35039:SF3">
    <property type="entry name" value="3-KETO-L-GULONATE-6-PHOSPHATE DECARBOXYLASE SGBH-RELATED"/>
    <property type="match status" value="1"/>
</dbReference>
<dbReference type="Pfam" id="PF00215">
    <property type="entry name" value="OMPdecase"/>
    <property type="match status" value="1"/>
</dbReference>
<dbReference type="SMART" id="SM00934">
    <property type="entry name" value="OMPdecase"/>
    <property type="match status" value="1"/>
</dbReference>
<dbReference type="SUPFAM" id="SSF51366">
    <property type="entry name" value="Ribulose-phoshate binding barrel"/>
    <property type="match status" value="1"/>
</dbReference>
<name>HPS_STAAC</name>
<gene>
    <name type="ordered locus">SACOL0617</name>
</gene>
<sequence length="210" mass="22436">MELQLAIDLLNKEDAAELANKVKDYVDIVEIGTPIIYNEGLPAVKHMADNISNVKVLADMKIMDAADYEVSQAIKFGADVITILGVAEDASIKAAIEEAHKNNKQLLVDMIAVQDLEKRAKELDEMGADYIAVHTGYDLQAEGQSPLESLRTVKSVIKNSKVAVAGGIKPDTIKDIVAESPDLVIVGGGIANADDPVEAAKQCRAAIEGK</sequence>
<organism>
    <name type="scientific">Staphylococcus aureus (strain COL)</name>
    <dbReference type="NCBI Taxonomy" id="93062"/>
    <lineage>
        <taxon>Bacteria</taxon>
        <taxon>Bacillati</taxon>
        <taxon>Bacillota</taxon>
        <taxon>Bacilli</taxon>
        <taxon>Bacillales</taxon>
        <taxon>Staphylococcaceae</taxon>
        <taxon>Staphylococcus</taxon>
    </lineage>
</organism>
<comment type="function">
    <text evidence="1">Catalyzes the condensation of ribulose 5-phosphate with formaldehyde to form 3-hexulose 6-phosphate.</text>
</comment>
<comment type="catalytic activity">
    <reaction>
        <text>D-ribulose 5-phosphate + formaldehyde = D-arabino-hex-3-ulose 6-phosphate</text>
        <dbReference type="Rhea" id="RHEA:25201"/>
        <dbReference type="ChEBI" id="CHEBI:16842"/>
        <dbReference type="ChEBI" id="CHEBI:58121"/>
        <dbReference type="ChEBI" id="CHEBI:58542"/>
        <dbReference type="EC" id="4.1.2.43"/>
    </reaction>
</comment>
<comment type="pathway">
    <text>One-carbon metabolism; formaldehyde assimilation via RuMP pathway; D-fructose 6-phosphate from D-ribulose 5-phosphate and formaldehyde: step 1/2.</text>
</comment>
<comment type="similarity">
    <text evidence="2">Belongs to the HPS/KGPDC family. HPS subfamily.</text>
</comment>
<reference key="1">
    <citation type="journal article" date="2005" name="J. Bacteriol.">
        <title>Insights on evolution of virulence and resistance from the complete genome analysis of an early methicillin-resistant Staphylococcus aureus strain and a biofilm-producing methicillin-resistant Staphylococcus epidermidis strain.</title>
        <authorList>
            <person name="Gill S.R."/>
            <person name="Fouts D.E."/>
            <person name="Archer G.L."/>
            <person name="Mongodin E.F."/>
            <person name="DeBoy R.T."/>
            <person name="Ravel J."/>
            <person name="Paulsen I.T."/>
            <person name="Kolonay J.F."/>
            <person name="Brinkac L.M."/>
            <person name="Beanan M.J."/>
            <person name="Dodson R.J."/>
            <person name="Daugherty S.C."/>
            <person name="Madupu R."/>
            <person name="Angiuoli S.V."/>
            <person name="Durkin A.S."/>
            <person name="Haft D.H."/>
            <person name="Vamathevan J.J."/>
            <person name="Khouri H."/>
            <person name="Utterback T.R."/>
            <person name="Lee C."/>
            <person name="Dimitrov G."/>
            <person name="Jiang L."/>
            <person name="Qin H."/>
            <person name="Weidman J."/>
            <person name="Tran K."/>
            <person name="Kang K.H."/>
            <person name="Hance I.R."/>
            <person name="Nelson K.E."/>
            <person name="Fraser C.M."/>
        </authorList>
    </citation>
    <scope>NUCLEOTIDE SEQUENCE [LARGE SCALE GENOMIC DNA]</scope>
    <source>
        <strain>COL</strain>
    </source>
</reference>
<feature type="chain" id="PRO_0000269518" description="3-hexulose-6-phosphate synthase">
    <location>
        <begin position="1"/>
        <end position="210"/>
    </location>
</feature>
<accession>Q5HIA5</accession>
<proteinExistence type="inferred from homology"/>
<evidence type="ECO:0000250" key="1"/>
<evidence type="ECO:0000305" key="2"/>
<protein>
    <recommendedName>
        <fullName>3-hexulose-6-phosphate synthase</fullName>
        <shortName>HPS</shortName>
        <ecNumber>4.1.2.43</ecNumber>
    </recommendedName>
    <alternativeName>
        <fullName>D-arabino-3-hexulose-6-phosphate formaldehyde lyase</fullName>
    </alternativeName>
</protein>
<keyword id="KW-0119">Carbohydrate metabolism</keyword>
<keyword id="KW-0456">Lyase</keyword>
<keyword id="KW-0554">One-carbon metabolism</keyword>